<feature type="chain" id="PRO_1000016627" description="tRNA uridine 5-carboxymethylaminomethyl modification enzyme MnmG">
    <location>
        <begin position="1"/>
        <end position="624"/>
    </location>
</feature>
<feature type="binding site" evidence="1">
    <location>
        <begin position="11"/>
        <end position="16"/>
    </location>
    <ligand>
        <name>FAD</name>
        <dbReference type="ChEBI" id="CHEBI:57692"/>
    </ligand>
</feature>
<feature type="binding site" evidence="1">
    <location>
        <begin position="270"/>
        <end position="284"/>
    </location>
    <ligand>
        <name>NAD(+)</name>
        <dbReference type="ChEBI" id="CHEBI:57540"/>
    </ligand>
</feature>
<sequence length="624" mass="66777">MTASFDVIVIGGGHAGCEAATAAARMGARTALVTHRLSTVGAMSCNPAIGGLGKGHLVREIDALDGLMGRVADAAGIQFRMLNRRKGPAVRGPRAQEDRKLYAAAMQAEIREAANLVVIEGEADDLIVADGRIAGIRLIDSRAFKTGAVVVTTGTFLRGLIHLGEKSWPAGRVDEAPALGLSVSFERIGFTLGRLKTGTPPRLDGATIDWAAVEMQPGDDPPEPFSVMTSRITTPQIRCGITRTMPATHEVIRANVHRSPIYSGQIRSSGPRYCPSLEDKVVRFGDRDGHQIFLEPEGLDDTTVYPNGISTSLPEEVQLAILATIPGLTKVRMIRPGYAIEYDHVDPRELDPTLQTRRLPGLFLAGQINGTTGYEEAAAQGLVAGLNAALAAGGGDPVVFDRADGYLGVMIDDLVTRGITEPYRMFTSRAEYRLTLRADNADQRLTDKGIAMGCVGAGRAVHHRAKMAALSAAKALATSLSVTPNEAARYGLSLNRDGHRRSAFELLAYPEIGWGEVAAIWPELSAIDPGVAVHLEIDAKYDVYLKRQTADVEAFRRDESLVLADVDYDAVPGLSNEARARLERARPRTVGQAGRLDGITPAALGILAAYLRREARKKTATASA</sequence>
<gene>
    <name evidence="1" type="primary">mnmG</name>
    <name evidence="1" type="synonym">gidA</name>
    <name type="ordered locus">Nham_0105</name>
</gene>
<protein>
    <recommendedName>
        <fullName evidence="1">tRNA uridine 5-carboxymethylaminomethyl modification enzyme MnmG</fullName>
    </recommendedName>
    <alternativeName>
        <fullName evidence="1">Glucose-inhibited division protein A</fullName>
    </alternativeName>
</protein>
<keyword id="KW-0963">Cytoplasm</keyword>
<keyword id="KW-0274">FAD</keyword>
<keyword id="KW-0285">Flavoprotein</keyword>
<keyword id="KW-0520">NAD</keyword>
<keyword id="KW-1185">Reference proteome</keyword>
<keyword id="KW-0819">tRNA processing</keyword>
<dbReference type="EMBL" id="CP000319">
    <property type="protein sequence ID" value="ABE61006.1"/>
    <property type="molecule type" value="Genomic_DNA"/>
</dbReference>
<dbReference type="RefSeq" id="WP_011508713.1">
    <property type="nucleotide sequence ID" value="NC_007964.1"/>
</dbReference>
<dbReference type="SMR" id="Q1QRZ1"/>
<dbReference type="STRING" id="323097.Nham_0105"/>
<dbReference type="KEGG" id="nha:Nham_0105"/>
<dbReference type="eggNOG" id="COG0445">
    <property type="taxonomic scope" value="Bacteria"/>
</dbReference>
<dbReference type="HOGENOM" id="CLU_007831_2_2_5"/>
<dbReference type="OrthoDB" id="9815560at2"/>
<dbReference type="Proteomes" id="UP000001953">
    <property type="component" value="Chromosome"/>
</dbReference>
<dbReference type="GO" id="GO:0005829">
    <property type="term" value="C:cytosol"/>
    <property type="evidence" value="ECO:0007669"/>
    <property type="project" value="TreeGrafter"/>
</dbReference>
<dbReference type="GO" id="GO:0050660">
    <property type="term" value="F:flavin adenine dinucleotide binding"/>
    <property type="evidence" value="ECO:0007669"/>
    <property type="project" value="UniProtKB-UniRule"/>
</dbReference>
<dbReference type="GO" id="GO:0030488">
    <property type="term" value="P:tRNA methylation"/>
    <property type="evidence" value="ECO:0007669"/>
    <property type="project" value="TreeGrafter"/>
</dbReference>
<dbReference type="GO" id="GO:0002098">
    <property type="term" value="P:tRNA wobble uridine modification"/>
    <property type="evidence" value="ECO:0007669"/>
    <property type="project" value="InterPro"/>
</dbReference>
<dbReference type="FunFam" id="3.50.50.60:FF:000145">
    <property type="entry name" value="tRNA uridine 5-carboxymethylaminomethyl modification enzyme"/>
    <property type="match status" value="1"/>
</dbReference>
<dbReference type="FunFam" id="1.10.150.570:FF:000001">
    <property type="entry name" value="tRNA uridine 5-carboxymethylaminomethyl modification enzyme MnmG"/>
    <property type="match status" value="1"/>
</dbReference>
<dbReference type="FunFam" id="3.50.50.60:FF:000002">
    <property type="entry name" value="tRNA uridine 5-carboxymethylaminomethyl modification enzyme MnmG"/>
    <property type="match status" value="1"/>
</dbReference>
<dbReference type="Gene3D" id="3.50.50.60">
    <property type="entry name" value="FAD/NAD(P)-binding domain"/>
    <property type="match status" value="2"/>
</dbReference>
<dbReference type="Gene3D" id="1.10.150.570">
    <property type="entry name" value="GidA associated domain, C-terminal subdomain"/>
    <property type="match status" value="1"/>
</dbReference>
<dbReference type="Gene3D" id="1.10.10.1800">
    <property type="entry name" value="tRNA uridine 5-carboxymethylaminomethyl modification enzyme MnmG/GidA"/>
    <property type="match status" value="1"/>
</dbReference>
<dbReference type="HAMAP" id="MF_00129">
    <property type="entry name" value="MnmG_GidA"/>
    <property type="match status" value="1"/>
</dbReference>
<dbReference type="InterPro" id="IPR036188">
    <property type="entry name" value="FAD/NAD-bd_sf"/>
</dbReference>
<dbReference type="InterPro" id="IPR049312">
    <property type="entry name" value="GIDA_C_N"/>
</dbReference>
<dbReference type="InterPro" id="IPR004416">
    <property type="entry name" value="MnmG"/>
</dbReference>
<dbReference type="InterPro" id="IPR002218">
    <property type="entry name" value="MnmG-rel"/>
</dbReference>
<dbReference type="InterPro" id="IPR020595">
    <property type="entry name" value="MnmG-rel_CS"/>
</dbReference>
<dbReference type="InterPro" id="IPR026904">
    <property type="entry name" value="MnmG_C"/>
</dbReference>
<dbReference type="InterPro" id="IPR047001">
    <property type="entry name" value="MnmG_C_subdom"/>
</dbReference>
<dbReference type="InterPro" id="IPR044920">
    <property type="entry name" value="MnmG_C_subdom_sf"/>
</dbReference>
<dbReference type="InterPro" id="IPR040131">
    <property type="entry name" value="MnmG_N"/>
</dbReference>
<dbReference type="NCBIfam" id="TIGR00136">
    <property type="entry name" value="mnmG_gidA"/>
    <property type="match status" value="1"/>
</dbReference>
<dbReference type="PANTHER" id="PTHR11806">
    <property type="entry name" value="GLUCOSE INHIBITED DIVISION PROTEIN A"/>
    <property type="match status" value="1"/>
</dbReference>
<dbReference type="PANTHER" id="PTHR11806:SF0">
    <property type="entry name" value="PROTEIN MTO1 HOMOLOG, MITOCHONDRIAL"/>
    <property type="match status" value="1"/>
</dbReference>
<dbReference type="Pfam" id="PF01134">
    <property type="entry name" value="GIDA"/>
    <property type="match status" value="1"/>
</dbReference>
<dbReference type="Pfam" id="PF21680">
    <property type="entry name" value="GIDA_C_1st"/>
    <property type="match status" value="1"/>
</dbReference>
<dbReference type="Pfam" id="PF13932">
    <property type="entry name" value="SAM_GIDA_C"/>
    <property type="match status" value="1"/>
</dbReference>
<dbReference type="PRINTS" id="PR00411">
    <property type="entry name" value="PNDRDTASEI"/>
</dbReference>
<dbReference type="SMART" id="SM01228">
    <property type="entry name" value="GIDA_assoc_3"/>
    <property type="match status" value="1"/>
</dbReference>
<dbReference type="SUPFAM" id="SSF51905">
    <property type="entry name" value="FAD/NAD(P)-binding domain"/>
    <property type="match status" value="1"/>
</dbReference>
<dbReference type="PROSITE" id="PS01280">
    <property type="entry name" value="GIDA_1"/>
    <property type="match status" value="1"/>
</dbReference>
<dbReference type="PROSITE" id="PS01281">
    <property type="entry name" value="GIDA_2"/>
    <property type="match status" value="1"/>
</dbReference>
<comment type="function">
    <text evidence="1">NAD-binding protein involved in the addition of a carboxymethylaminomethyl (cmnm) group at the wobble position (U34) of certain tRNAs, forming tRNA-cmnm(5)s(2)U34.</text>
</comment>
<comment type="cofactor">
    <cofactor evidence="1">
        <name>FAD</name>
        <dbReference type="ChEBI" id="CHEBI:57692"/>
    </cofactor>
</comment>
<comment type="subunit">
    <text evidence="1">Homodimer. Heterotetramer of two MnmE and two MnmG subunits.</text>
</comment>
<comment type="subcellular location">
    <subcellularLocation>
        <location evidence="1">Cytoplasm</location>
    </subcellularLocation>
</comment>
<comment type="similarity">
    <text evidence="1">Belongs to the MnmG family.</text>
</comment>
<name>MNMG_NITHX</name>
<organism>
    <name type="scientific">Nitrobacter hamburgensis (strain DSM 10229 / NCIMB 13809 / X14)</name>
    <dbReference type="NCBI Taxonomy" id="323097"/>
    <lineage>
        <taxon>Bacteria</taxon>
        <taxon>Pseudomonadati</taxon>
        <taxon>Pseudomonadota</taxon>
        <taxon>Alphaproteobacteria</taxon>
        <taxon>Hyphomicrobiales</taxon>
        <taxon>Nitrobacteraceae</taxon>
        <taxon>Nitrobacter</taxon>
    </lineage>
</organism>
<accession>Q1QRZ1</accession>
<reference key="1">
    <citation type="submission" date="2006-03" db="EMBL/GenBank/DDBJ databases">
        <title>Complete sequence of chromosome of Nitrobacter hamburgensis X14.</title>
        <authorList>
            <consortium name="US DOE Joint Genome Institute"/>
            <person name="Copeland A."/>
            <person name="Lucas S."/>
            <person name="Lapidus A."/>
            <person name="Barry K."/>
            <person name="Detter J.C."/>
            <person name="Glavina del Rio T."/>
            <person name="Hammon N."/>
            <person name="Israni S."/>
            <person name="Dalin E."/>
            <person name="Tice H."/>
            <person name="Pitluck S."/>
            <person name="Chain P."/>
            <person name="Malfatti S."/>
            <person name="Shin M."/>
            <person name="Vergez L."/>
            <person name="Schmutz J."/>
            <person name="Larimer F."/>
            <person name="Land M."/>
            <person name="Hauser L."/>
            <person name="Kyrpides N."/>
            <person name="Ivanova N."/>
            <person name="Ward B."/>
            <person name="Arp D."/>
            <person name="Klotz M."/>
            <person name="Stein L."/>
            <person name="O'Mullan G."/>
            <person name="Starkenburg S."/>
            <person name="Sayavedra L."/>
            <person name="Poret-Peterson A.T."/>
            <person name="Gentry M.E."/>
            <person name="Bruce D."/>
            <person name="Richardson P."/>
        </authorList>
    </citation>
    <scope>NUCLEOTIDE SEQUENCE [LARGE SCALE GENOMIC DNA]</scope>
    <source>
        <strain>DSM 10229 / NCIMB 13809 / X14</strain>
    </source>
</reference>
<evidence type="ECO:0000255" key="1">
    <source>
        <dbReference type="HAMAP-Rule" id="MF_00129"/>
    </source>
</evidence>
<proteinExistence type="inferred from homology"/>